<proteinExistence type="inferred from homology"/>
<feature type="chain" id="PRO_1000050567" description="Ketol-acid reductoisomerase (NADP(+))">
    <location>
        <begin position="1"/>
        <end position="338"/>
    </location>
</feature>
<feature type="domain" description="KARI N-terminal Rossmann" evidence="2">
    <location>
        <begin position="1"/>
        <end position="181"/>
    </location>
</feature>
<feature type="domain" description="KARI C-terminal knotted" evidence="3">
    <location>
        <begin position="182"/>
        <end position="327"/>
    </location>
</feature>
<feature type="active site" evidence="1">
    <location>
        <position position="107"/>
    </location>
</feature>
<feature type="binding site" evidence="1">
    <location>
        <begin position="24"/>
        <end position="27"/>
    </location>
    <ligand>
        <name>NADP(+)</name>
        <dbReference type="ChEBI" id="CHEBI:58349"/>
    </ligand>
</feature>
<feature type="binding site" evidence="1">
    <location>
        <position position="47"/>
    </location>
    <ligand>
        <name>NADP(+)</name>
        <dbReference type="ChEBI" id="CHEBI:58349"/>
    </ligand>
</feature>
<feature type="binding site" evidence="1">
    <location>
        <position position="52"/>
    </location>
    <ligand>
        <name>NADP(+)</name>
        <dbReference type="ChEBI" id="CHEBI:58349"/>
    </ligand>
</feature>
<feature type="binding site" evidence="1">
    <location>
        <position position="133"/>
    </location>
    <ligand>
        <name>NADP(+)</name>
        <dbReference type="ChEBI" id="CHEBI:58349"/>
    </ligand>
</feature>
<feature type="binding site" evidence="1">
    <location>
        <position position="190"/>
    </location>
    <ligand>
        <name>Mg(2+)</name>
        <dbReference type="ChEBI" id="CHEBI:18420"/>
        <label>1</label>
    </ligand>
</feature>
<feature type="binding site" evidence="1">
    <location>
        <position position="190"/>
    </location>
    <ligand>
        <name>Mg(2+)</name>
        <dbReference type="ChEBI" id="CHEBI:18420"/>
        <label>2</label>
    </ligand>
</feature>
<feature type="binding site" evidence="1">
    <location>
        <position position="194"/>
    </location>
    <ligand>
        <name>Mg(2+)</name>
        <dbReference type="ChEBI" id="CHEBI:18420"/>
        <label>1</label>
    </ligand>
</feature>
<feature type="binding site" evidence="1">
    <location>
        <position position="226"/>
    </location>
    <ligand>
        <name>Mg(2+)</name>
        <dbReference type="ChEBI" id="CHEBI:18420"/>
        <label>2</label>
    </ligand>
</feature>
<feature type="binding site" evidence="1">
    <location>
        <position position="230"/>
    </location>
    <ligand>
        <name>Mg(2+)</name>
        <dbReference type="ChEBI" id="CHEBI:18420"/>
        <label>2</label>
    </ligand>
</feature>
<feature type="binding site" evidence="1">
    <location>
        <position position="251"/>
    </location>
    <ligand>
        <name>substrate</name>
    </ligand>
</feature>
<accession>Q0KCU2</accession>
<keyword id="KW-0028">Amino-acid biosynthesis</keyword>
<keyword id="KW-0100">Branched-chain amino acid biosynthesis</keyword>
<keyword id="KW-0460">Magnesium</keyword>
<keyword id="KW-0479">Metal-binding</keyword>
<keyword id="KW-0521">NADP</keyword>
<keyword id="KW-0560">Oxidoreductase</keyword>
<keyword id="KW-1185">Reference proteome</keyword>
<organism>
    <name type="scientific">Cupriavidus necator (strain ATCC 17699 / DSM 428 / KCTC 22496 / NCIMB 10442 / H16 / Stanier 337)</name>
    <name type="common">Ralstonia eutropha</name>
    <dbReference type="NCBI Taxonomy" id="381666"/>
    <lineage>
        <taxon>Bacteria</taxon>
        <taxon>Pseudomonadati</taxon>
        <taxon>Pseudomonadota</taxon>
        <taxon>Betaproteobacteria</taxon>
        <taxon>Burkholderiales</taxon>
        <taxon>Burkholderiaceae</taxon>
        <taxon>Cupriavidus</taxon>
    </lineage>
</organism>
<name>ILVC_CUPNH</name>
<reference key="1">
    <citation type="journal article" date="2006" name="Nat. Biotechnol.">
        <title>Genome sequence of the bioplastic-producing 'Knallgas' bacterium Ralstonia eutropha H16.</title>
        <authorList>
            <person name="Pohlmann A."/>
            <person name="Fricke W.F."/>
            <person name="Reinecke F."/>
            <person name="Kusian B."/>
            <person name="Liesegang H."/>
            <person name="Cramm R."/>
            <person name="Eitinger T."/>
            <person name="Ewering C."/>
            <person name="Poetter M."/>
            <person name="Schwartz E."/>
            <person name="Strittmatter A."/>
            <person name="Voss I."/>
            <person name="Gottschalk G."/>
            <person name="Steinbuechel A."/>
            <person name="Friedrich B."/>
            <person name="Bowien B."/>
        </authorList>
    </citation>
    <scope>NUCLEOTIDE SEQUENCE [LARGE SCALE GENOMIC DNA]</scope>
    <source>
        <strain>ATCC 17699 / DSM 428 / KCTC 22496 / NCIMB 10442 / H16 / Stanier 337</strain>
    </source>
</reference>
<dbReference type="EC" id="1.1.1.86" evidence="1"/>
<dbReference type="EMBL" id="AM260479">
    <property type="protein sequence ID" value="CAJ92179.1"/>
    <property type="molecule type" value="Genomic_DNA"/>
</dbReference>
<dbReference type="RefSeq" id="WP_010809143.1">
    <property type="nucleotide sequence ID" value="NZ_CP039287.1"/>
</dbReference>
<dbReference type="SMR" id="Q0KCU2"/>
<dbReference type="STRING" id="381666.H16_A1037"/>
<dbReference type="KEGG" id="reh:H16_A1037"/>
<dbReference type="eggNOG" id="COG0059">
    <property type="taxonomic scope" value="Bacteria"/>
</dbReference>
<dbReference type="HOGENOM" id="CLU_033821_0_1_4"/>
<dbReference type="OrthoDB" id="9804088at2"/>
<dbReference type="BioCyc" id="MetaCyc:MONOMER-18814"/>
<dbReference type="UniPathway" id="UPA00047">
    <property type="reaction ID" value="UER00056"/>
</dbReference>
<dbReference type="UniPathway" id="UPA00049">
    <property type="reaction ID" value="UER00060"/>
</dbReference>
<dbReference type="Proteomes" id="UP000008210">
    <property type="component" value="Chromosome 1"/>
</dbReference>
<dbReference type="GO" id="GO:0005829">
    <property type="term" value="C:cytosol"/>
    <property type="evidence" value="ECO:0007669"/>
    <property type="project" value="TreeGrafter"/>
</dbReference>
<dbReference type="GO" id="GO:0004455">
    <property type="term" value="F:ketol-acid reductoisomerase activity"/>
    <property type="evidence" value="ECO:0007669"/>
    <property type="project" value="UniProtKB-UniRule"/>
</dbReference>
<dbReference type="GO" id="GO:0000287">
    <property type="term" value="F:magnesium ion binding"/>
    <property type="evidence" value="ECO:0007669"/>
    <property type="project" value="UniProtKB-UniRule"/>
</dbReference>
<dbReference type="GO" id="GO:0050661">
    <property type="term" value="F:NADP binding"/>
    <property type="evidence" value="ECO:0007669"/>
    <property type="project" value="InterPro"/>
</dbReference>
<dbReference type="GO" id="GO:0009097">
    <property type="term" value="P:isoleucine biosynthetic process"/>
    <property type="evidence" value="ECO:0007669"/>
    <property type="project" value="UniProtKB-UniRule"/>
</dbReference>
<dbReference type="GO" id="GO:0009099">
    <property type="term" value="P:L-valine biosynthetic process"/>
    <property type="evidence" value="ECO:0007669"/>
    <property type="project" value="UniProtKB-UniRule"/>
</dbReference>
<dbReference type="FunFam" id="3.40.50.720:FF:000023">
    <property type="entry name" value="Ketol-acid reductoisomerase (NADP(+))"/>
    <property type="match status" value="1"/>
</dbReference>
<dbReference type="Gene3D" id="6.10.240.10">
    <property type="match status" value="1"/>
</dbReference>
<dbReference type="Gene3D" id="3.40.50.720">
    <property type="entry name" value="NAD(P)-binding Rossmann-like Domain"/>
    <property type="match status" value="1"/>
</dbReference>
<dbReference type="HAMAP" id="MF_00435">
    <property type="entry name" value="IlvC"/>
    <property type="match status" value="1"/>
</dbReference>
<dbReference type="InterPro" id="IPR008927">
    <property type="entry name" value="6-PGluconate_DH-like_C_sf"/>
</dbReference>
<dbReference type="InterPro" id="IPR013023">
    <property type="entry name" value="KARI"/>
</dbReference>
<dbReference type="InterPro" id="IPR000506">
    <property type="entry name" value="KARI_C"/>
</dbReference>
<dbReference type="InterPro" id="IPR013116">
    <property type="entry name" value="KARI_N"/>
</dbReference>
<dbReference type="InterPro" id="IPR014359">
    <property type="entry name" value="KARI_prok"/>
</dbReference>
<dbReference type="InterPro" id="IPR036291">
    <property type="entry name" value="NAD(P)-bd_dom_sf"/>
</dbReference>
<dbReference type="NCBIfam" id="TIGR00465">
    <property type="entry name" value="ilvC"/>
    <property type="match status" value="1"/>
</dbReference>
<dbReference type="NCBIfam" id="NF004017">
    <property type="entry name" value="PRK05479.1"/>
    <property type="match status" value="1"/>
</dbReference>
<dbReference type="NCBIfam" id="NF009940">
    <property type="entry name" value="PRK13403.1"/>
    <property type="match status" value="1"/>
</dbReference>
<dbReference type="PANTHER" id="PTHR21371">
    <property type="entry name" value="KETOL-ACID REDUCTOISOMERASE, MITOCHONDRIAL"/>
    <property type="match status" value="1"/>
</dbReference>
<dbReference type="PANTHER" id="PTHR21371:SF1">
    <property type="entry name" value="KETOL-ACID REDUCTOISOMERASE, MITOCHONDRIAL"/>
    <property type="match status" value="1"/>
</dbReference>
<dbReference type="Pfam" id="PF01450">
    <property type="entry name" value="KARI_C"/>
    <property type="match status" value="1"/>
</dbReference>
<dbReference type="Pfam" id="PF07991">
    <property type="entry name" value="KARI_N"/>
    <property type="match status" value="1"/>
</dbReference>
<dbReference type="PIRSF" id="PIRSF000116">
    <property type="entry name" value="IlvC_gammaproteo"/>
    <property type="match status" value="1"/>
</dbReference>
<dbReference type="SUPFAM" id="SSF48179">
    <property type="entry name" value="6-phosphogluconate dehydrogenase C-terminal domain-like"/>
    <property type="match status" value="1"/>
</dbReference>
<dbReference type="SUPFAM" id="SSF51735">
    <property type="entry name" value="NAD(P)-binding Rossmann-fold domains"/>
    <property type="match status" value="1"/>
</dbReference>
<dbReference type="PROSITE" id="PS51851">
    <property type="entry name" value="KARI_C"/>
    <property type="match status" value="1"/>
</dbReference>
<dbReference type="PROSITE" id="PS51850">
    <property type="entry name" value="KARI_N"/>
    <property type="match status" value="1"/>
</dbReference>
<protein>
    <recommendedName>
        <fullName evidence="1">Ketol-acid reductoisomerase (NADP(+))</fullName>
        <shortName evidence="1">KARI</shortName>
        <ecNumber evidence="1">1.1.1.86</ecNumber>
    </recommendedName>
    <alternativeName>
        <fullName evidence="1">Acetohydroxy-acid isomeroreductase</fullName>
        <shortName evidence="1">AHIR</shortName>
    </alternativeName>
    <alternativeName>
        <fullName evidence="1">Alpha-keto-beta-hydroxylacyl reductoisomerase</fullName>
    </alternativeName>
    <alternativeName>
        <fullName evidence="1">Ketol-acid reductoisomerase type 1</fullName>
    </alternativeName>
    <alternativeName>
        <fullName evidence="1">Ketol-acid reductoisomerase type I</fullName>
    </alternativeName>
</protein>
<gene>
    <name evidence="1" type="primary">ilvC</name>
    <name type="ordered locus">H16_A1037</name>
</gene>
<sequence>MKVFYDKDADLSLIKGKNVTIIGYGSQGHAHALNLKDSGVNVTVGLRKSGASWNKAANAGLQVKEVAEAVKGADVVMILLPDEQIADVYKNEVHDNIKEGAALAFAHGFNVHYGAVIPRADLDVIMIAPKAPGHTVRATYTQGGGVPHLIAVHQNKSGAARDIALSYATANGGGRAGIIETNFREETETDLFGEQAVLCGGTVELIKAGFETLVEAGYAPEMAYFECLHELKLIVDLIYEGGIANMNYSISNNAEYGEYVTGPRVVTEETKKAMKQCLTDIQTGEYAKSFLLENKAGAPTLISRRRLTAEHQIEEVGAKLRAMMPWIAKNKMVDQSKN</sequence>
<comment type="function">
    <text evidence="1">Involved in the biosynthesis of branched-chain amino acids (BCAA). Catalyzes an alkyl-migration followed by a ketol-acid reduction of (S)-2-acetolactate (S2AL) to yield (R)-2,3-dihydroxy-isovalerate. In the isomerase reaction, S2AL is rearranged via a Mg-dependent methyl migration to produce 3-hydroxy-3-methyl-2-ketobutyrate (HMKB). In the reductase reaction, this 2-ketoacid undergoes a metal-dependent reduction by NADPH to yield (R)-2,3-dihydroxy-isovalerate.</text>
</comment>
<comment type="catalytic activity">
    <reaction evidence="1">
        <text>(2R)-2,3-dihydroxy-3-methylbutanoate + NADP(+) = (2S)-2-acetolactate + NADPH + H(+)</text>
        <dbReference type="Rhea" id="RHEA:22068"/>
        <dbReference type="ChEBI" id="CHEBI:15378"/>
        <dbReference type="ChEBI" id="CHEBI:49072"/>
        <dbReference type="ChEBI" id="CHEBI:57783"/>
        <dbReference type="ChEBI" id="CHEBI:58349"/>
        <dbReference type="ChEBI" id="CHEBI:58476"/>
        <dbReference type="EC" id="1.1.1.86"/>
    </reaction>
</comment>
<comment type="catalytic activity">
    <reaction evidence="1">
        <text>(2R,3R)-2,3-dihydroxy-3-methylpentanoate + NADP(+) = (S)-2-ethyl-2-hydroxy-3-oxobutanoate + NADPH + H(+)</text>
        <dbReference type="Rhea" id="RHEA:13493"/>
        <dbReference type="ChEBI" id="CHEBI:15378"/>
        <dbReference type="ChEBI" id="CHEBI:49256"/>
        <dbReference type="ChEBI" id="CHEBI:49258"/>
        <dbReference type="ChEBI" id="CHEBI:57783"/>
        <dbReference type="ChEBI" id="CHEBI:58349"/>
        <dbReference type="EC" id="1.1.1.86"/>
    </reaction>
</comment>
<comment type="cofactor">
    <cofactor evidence="1">
        <name>Mg(2+)</name>
        <dbReference type="ChEBI" id="CHEBI:18420"/>
    </cofactor>
    <text evidence="1">Binds 2 magnesium ions per subunit.</text>
</comment>
<comment type="pathway">
    <text evidence="1">Amino-acid biosynthesis; L-isoleucine biosynthesis; L-isoleucine from 2-oxobutanoate: step 2/4.</text>
</comment>
<comment type="pathway">
    <text evidence="1">Amino-acid biosynthesis; L-valine biosynthesis; L-valine from pyruvate: step 2/4.</text>
</comment>
<comment type="similarity">
    <text evidence="1">Belongs to the ketol-acid reductoisomerase family.</text>
</comment>
<evidence type="ECO:0000255" key="1">
    <source>
        <dbReference type="HAMAP-Rule" id="MF_00435"/>
    </source>
</evidence>
<evidence type="ECO:0000255" key="2">
    <source>
        <dbReference type="PROSITE-ProRule" id="PRU01197"/>
    </source>
</evidence>
<evidence type="ECO:0000255" key="3">
    <source>
        <dbReference type="PROSITE-ProRule" id="PRU01198"/>
    </source>
</evidence>